<organism>
    <name type="scientific">Rhodopseudomonas palustris (strain TIE-1)</name>
    <dbReference type="NCBI Taxonomy" id="395960"/>
    <lineage>
        <taxon>Bacteria</taxon>
        <taxon>Pseudomonadati</taxon>
        <taxon>Pseudomonadota</taxon>
        <taxon>Alphaproteobacteria</taxon>
        <taxon>Hyphomicrobiales</taxon>
        <taxon>Nitrobacteraceae</taxon>
        <taxon>Rhodopseudomonas</taxon>
    </lineage>
</organism>
<name>RBL2_RHOPT</name>
<protein>
    <recommendedName>
        <fullName evidence="1">Ribulose bisphosphate carboxylase</fullName>
        <shortName evidence="1">RuBisCO</shortName>
        <ecNumber evidence="1">4.1.1.39</ecNumber>
    </recommendedName>
</protein>
<reference key="1">
    <citation type="submission" date="2008-05" db="EMBL/GenBank/DDBJ databases">
        <title>Complete sequence of Rhodopseudomonas palustris TIE-1.</title>
        <authorList>
            <consortium name="US DOE Joint Genome Institute"/>
            <person name="Lucas S."/>
            <person name="Copeland A."/>
            <person name="Lapidus A."/>
            <person name="Glavina del Rio T."/>
            <person name="Dalin E."/>
            <person name="Tice H."/>
            <person name="Pitluck S."/>
            <person name="Chain P."/>
            <person name="Malfatti S."/>
            <person name="Shin M."/>
            <person name="Vergez L."/>
            <person name="Lang D."/>
            <person name="Schmutz J."/>
            <person name="Larimer F."/>
            <person name="Land M."/>
            <person name="Hauser L."/>
            <person name="Kyrpides N."/>
            <person name="Mikhailova N."/>
            <person name="Emerson D."/>
            <person name="Newman D.K."/>
            <person name="Roden E."/>
            <person name="Richardson P."/>
        </authorList>
    </citation>
    <scope>NUCLEOTIDE SEQUENCE [LARGE SCALE GENOMIC DNA]</scope>
    <source>
        <strain>TIE-1</strain>
    </source>
</reference>
<proteinExistence type="inferred from homology"/>
<dbReference type="EC" id="4.1.1.39" evidence="1"/>
<dbReference type="EMBL" id="CP001096">
    <property type="protein sequence ID" value="ACF03611.1"/>
    <property type="molecule type" value="Genomic_DNA"/>
</dbReference>
<dbReference type="RefSeq" id="WP_011160173.1">
    <property type="nucleotide sequence ID" value="NC_011004.1"/>
</dbReference>
<dbReference type="SMR" id="B3QB68"/>
<dbReference type="KEGG" id="rpt:Rpal_5122"/>
<dbReference type="HOGENOM" id="CLU_031450_3_1_5"/>
<dbReference type="OrthoDB" id="9764279at2"/>
<dbReference type="Proteomes" id="UP000001725">
    <property type="component" value="Chromosome"/>
</dbReference>
<dbReference type="GO" id="GO:0000287">
    <property type="term" value="F:magnesium ion binding"/>
    <property type="evidence" value="ECO:0007669"/>
    <property type="project" value="UniProtKB-UniRule"/>
</dbReference>
<dbReference type="GO" id="GO:0004497">
    <property type="term" value="F:monooxygenase activity"/>
    <property type="evidence" value="ECO:0007669"/>
    <property type="project" value="UniProtKB-KW"/>
</dbReference>
<dbReference type="GO" id="GO:0016984">
    <property type="term" value="F:ribulose-bisphosphate carboxylase activity"/>
    <property type="evidence" value="ECO:0007669"/>
    <property type="project" value="UniProtKB-UniRule"/>
</dbReference>
<dbReference type="GO" id="GO:0019253">
    <property type="term" value="P:reductive pentose-phosphate cycle"/>
    <property type="evidence" value="ECO:0007669"/>
    <property type="project" value="UniProtKB-KW"/>
</dbReference>
<dbReference type="CDD" id="cd08211">
    <property type="entry name" value="RuBisCO_large_II"/>
    <property type="match status" value="1"/>
</dbReference>
<dbReference type="Gene3D" id="3.20.20.110">
    <property type="entry name" value="Ribulose bisphosphate carboxylase, large subunit, C-terminal domain"/>
    <property type="match status" value="1"/>
</dbReference>
<dbReference type="Gene3D" id="3.30.70.150">
    <property type="entry name" value="RuBisCO large subunit, N-terminal domain"/>
    <property type="match status" value="1"/>
</dbReference>
<dbReference type="HAMAP" id="MF_01339">
    <property type="entry name" value="RuBisCO_L_type2"/>
    <property type="match status" value="1"/>
</dbReference>
<dbReference type="InterPro" id="IPR033966">
    <property type="entry name" value="RuBisCO"/>
</dbReference>
<dbReference type="InterPro" id="IPR020878">
    <property type="entry name" value="RuBisCo_large_chain_AS"/>
</dbReference>
<dbReference type="InterPro" id="IPR000685">
    <property type="entry name" value="RuBisCO_lsu_C"/>
</dbReference>
<dbReference type="InterPro" id="IPR036376">
    <property type="entry name" value="RuBisCO_lsu_C_sf"/>
</dbReference>
<dbReference type="InterPro" id="IPR017443">
    <property type="entry name" value="RuBisCO_lsu_fd_N"/>
</dbReference>
<dbReference type="InterPro" id="IPR036422">
    <property type="entry name" value="RuBisCO_lsu_N_sf"/>
</dbReference>
<dbReference type="InterPro" id="IPR020871">
    <property type="entry name" value="RuBisCO_lsuII"/>
</dbReference>
<dbReference type="NCBIfam" id="NF010002">
    <property type="entry name" value="PRK13475.1"/>
    <property type="match status" value="1"/>
</dbReference>
<dbReference type="PANTHER" id="PTHR42704">
    <property type="entry name" value="RIBULOSE BISPHOSPHATE CARBOXYLASE"/>
    <property type="match status" value="1"/>
</dbReference>
<dbReference type="PANTHER" id="PTHR42704:SF17">
    <property type="entry name" value="RIBULOSE BISPHOSPHATE CARBOXYLASE LARGE CHAIN"/>
    <property type="match status" value="1"/>
</dbReference>
<dbReference type="Pfam" id="PF00016">
    <property type="entry name" value="RuBisCO_large"/>
    <property type="match status" value="1"/>
</dbReference>
<dbReference type="Pfam" id="PF02788">
    <property type="entry name" value="RuBisCO_large_N"/>
    <property type="match status" value="1"/>
</dbReference>
<dbReference type="SFLD" id="SFLDS00014">
    <property type="entry name" value="RuBisCO"/>
    <property type="match status" value="1"/>
</dbReference>
<dbReference type="SFLD" id="SFLDG00301">
    <property type="entry name" value="RuBisCO-like_proteins"/>
    <property type="match status" value="1"/>
</dbReference>
<dbReference type="SUPFAM" id="SSF51649">
    <property type="entry name" value="RuBisCo, C-terminal domain"/>
    <property type="match status" value="1"/>
</dbReference>
<dbReference type="SUPFAM" id="SSF54966">
    <property type="entry name" value="RuBisCO, large subunit, small (N-terminal) domain"/>
    <property type="match status" value="1"/>
</dbReference>
<dbReference type="PROSITE" id="PS00157">
    <property type="entry name" value="RUBISCO_LARGE"/>
    <property type="match status" value="1"/>
</dbReference>
<gene>
    <name evidence="1" type="primary">cbbM</name>
    <name type="ordered locus">Rpal_5122</name>
</gene>
<accession>B3QB68</accession>
<evidence type="ECO:0000255" key="1">
    <source>
        <dbReference type="HAMAP-Rule" id="MF_01339"/>
    </source>
</evidence>
<feature type="chain" id="PRO_1000142754" description="Ribulose bisphosphate carboxylase">
    <location>
        <begin position="1"/>
        <end position="461"/>
    </location>
</feature>
<feature type="active site" description="Proton acceptor" evidence="1">
    <location>
        <position position="167"/>
    </location>
</feature>
<feature type="active site" description="Proton acceptor" evidence="1">
    <location>
        <position position="288"/>
    </location>
</feature>
<feature type="binding site" description="in homodimeric partner" evidence="1">
    <location>
        <position position="112"/>
    </location>
    <ligand>
        <name>substrate</name>
    </ligand>
</feature>
<feature type="binding site" evidence="1">
    <location>
        <position position="169"/>
    </location>
    <ligand>
        <name>substrate</name>
    </ligand>
</feature>
<feature type="binding site" description="via carbamate group" evidence="1">
    <location>
        <position position="192"/>
    </location>
    <ligand>
        <name>Mg(2+)</name>
        <dbReference type="ChEBI" id="CHEBI:18420"/>
    </ligand>
</feature>
<feature type="binding site" evidence="1">
    <location>
        <position position="194"/>
    </location>
    <ligand>
        <name>Mg(2+)</name>
        <dbReference type="ChEBI" id="CHEBI:18420"/>
    </ligand>
</feature>
<feature type="binding site" evidence="1">
    <location>
        <position position="195"/>
    </location>
    <ligand>
        <name>Mg(2+)</name>
        <dbReference type="ChEBI" id="CHEBI:18420"/>
    </ligand>
</feature>
<feature type="binding site" evidence="1">
    <location>
        <position position="289"/>
    </location>
    <ligand>
        <name>substrate</name>
    </ligand>
</feature>
<feature type="binding site" evidence="1">
    <location>
        <position position="322"/>
    </location>
    <ligand>
        <name>substrate</name>
    </ligand>
</feature>
<feature type="binding site" evidence="1">
    <location>
        <position position="369"/>
    </location>
    <ligand>
        <name>substrate</name>
    </ligand>
</feature>
<feature type="site" description="Transition state stabilizer" evidence="1">
    <location>
        <position position="330"/>
    </location>
</feature>
<feature type="modified residue" description="N6-carboxylysine" evidence="1">
    <location>
        <position position="192"/>
    </location>
</feature>
<keyword id="KW-0113">Calvin cycle</keyword>
<keyword id="KW-0120">Carbon dioxide fixation</keyword>
<keyword id="KW-0456">Lyase</keyword>
<keyword id="KW-0460">Magnesium</keyword>
<keyword id="KW-0479">Metal-binding</keyword>
<keyword id="KW-0503">Monooxygenase</keyword>
<keyword id="KW-0560">Oxidoreductase</keyword>
<keyword id="KW-0602">Photosynthesis</keyword>
<sequence length="461" mass="50485">MDQSNRYANLNLKESELIAGGRHVLCAYIMKPKAGFGNFIQTAAHFAAESSTGTNVEVSTTDDFTRGVDALVYEVDEANSLMKIAYPIELFDRNVIDGRAMIASFLTLTIGNNQGMGDVEYAKMYDFYVPPAYLKLFDGPSTTIKDLWRVLGRPVINGGFIVGTIIKPKLGLRPQPFANACYDFWLGGDFIKNDEPQGNQVFAPFKDTVRAVADAMRRAQDKTGEAKLFSFNITADDHYEMLARGEFILETFADNADHIAFLVDGYVAGPAAVTTARRAFPKQYLHYHRAGHGAVTSPQSKRGYTAFVLSKMARLQGASGIHTGTMGFGKMEGEAADRAIAYMITEDAADGPYFHQEWLGMNPTTPIISGGMNALRMPGFFDNLGHSNLIMTAGGGAFGHVDGGAAGAKSLRQAEQCWKQGADPVEFAKDHREFARAFESFPQDADKLYPNWRAKLKPQAA</sequence>
<comment type="function">
    <text evidence="1">RuBisCO catalyzes two reactions: the carboxylation of D-ribulose 1,5-bisphosphate, the primary event in carbon dioxide fixation, as well as the oxidative fragmentation of the pentose substrate. Both reactions occur simultaneously and in competition at the same active site.</text>
</comment>
<comment type="catalytic activity">
    <reaction evidence="1">
        <text>2 (2R)-3-phosphoglycerate + 2 H(+) = D-ribulose 1,5-bisphosphate + CO2 + H2O</text>
        <dbReference type="Rhea" id="RHEA:23124"/>
        <dbReference type="ChEBI" id="CHEBI:15377"/>
        <dbReference type="ChEBI" id="CHEBI:15378"/>
        <dbReference type="ChEBI" id="CHEBI:16526"/>
        <dbReference type="ChEBI" id="CHEBI:57870"/>
        <dbReference type="ChEBI" id="CHEBI:58272"/>
        <dbReference type="EC" id="4.1.1.39"/>
    </reaction>
</comment>
<comment type="catalytic activity">
    <reaction evidence="1">
        <text>D-ribulose 1,5-bisphosphate + O2 = 2-phosphoglycolate + (2R)-3-phosphoglycerate + 2 H(+)</text>
        <dbReference type="Rhea" id="RHEA:36631"/>
        <dbReference type="ChEBI" id="CHEBI:15378"/>
        <dbReference type="ChEBI" id="CHEBI:15379"/>
        <dbReference type="ChEBI" id="CHEBI:57870"/>
        <dbReference type="ChEBI" id="CHEBI:58033"/>
        <dbReference type="ChEBI" id="CHEBI:58272"/>
    </reaction>
</comment>
<comment type="cofactor">
    <cofactor evidence="1">
        <name>Mg(2+)</name>
        <dbReference type="ChEBI" id="CHEBI:18420"/>
    </cofactor>
    <text evidence="1">Binds 1 Mg(2+) ion per subunit.</text>
</comment>
<comment type="subunit">
    <text evidence="1">Homodimer.</text>
</comment>
<comment type="miscellaneous">
    <text evidence="1">The basic functional RuBisCO is composed of a large chain homodimer in a 'head-to-tail' conformation. In contrast to form I RuBisCO, the form II RuBisCO are composed solely of large subunits.</text>
</comment>
<comment type="similarity">
    <text evidence="1">Belongs to the RuBisCO large chain family. Type II subfamily.</text>
</comment>